<organism>
    <name type="scientific">Haemophilus influenzae (strain ATCC 51907 / DSM 11121 / KW20 / Rd)</name>
    <dbReference type="NCBI Taxonomy" id="71421"/>
    <lineage>
        <taxon>Bacteria</taxon>
        <taxon>Pseudomonadati</taxon>
        <taxon>Pseudomonadota</taxon>
        <taxon>Gammaproteobacteria</taxon>
        <taxon>Pasteurellales</taxon>
        <taxon>Pasteurellaceae</taxon>
        <taxon>Haemophilus</taxon>
    </lineage>
</organism>
<reference key="1">
    <citation type="journal article" date="1995" name="Science">
        <title>Whole-genome random sequencing and assembly of Haemophilus influenzae Rd.</title>
        <authorList>
            <person name="Fleischmann R.D."/>
            <person name="Adams M.D."/>
            <person name="White O."/>
            <person name="Clayton R.A."/>
            <person name="Kirkness E.F."/>
            <person name="Kerlavage A.R."/>
            <person name="Bult C.J."/>
            <person name="Tomb J.-F."/>
            <person name="Dougherty B.A."/>
            <person name="Merrick J.M."/>
            <person name="McKenney K."/>
            <person name="Sutton G.G."/>
            <person name="FitzHugh W."/>
            <person name="Fields C.A."/>
            <person name="Gocayne J.D."/>
            <person name="Scott J.D."/>
            <person name="Shirley R."/>
            <person name="Liu L.-I."/>
            <person name="Glodek A."/>
            <person name="Kelley J.M."/>
            <person name="Weidman J.F."/>
            <person name="Phillips C.A."/>
            <person name="Spriggs T."/>
            <person name="Hedblom E."/>
            <person name="Cotton M.D."/>
            <person name="Utterback T.R."/>
            <person name="Hanna M.C."/>
            <person name="Nguyen D.T."/>
            <person name="Saudek D.M."/>
            <person name="Brandon R.C."/>
            <person name="Fine L.D."/>
            <person name="Fritchman J.L."/>
            <person name="Fuhrmann J.L."/>
            <person name="Geoghagen N.S.M."/>
            <person name="Gnehm C.L."/>
            <person name="McDonald L.A."/>
            <person name="Small K.V."/>
            <person name="Fraser C.M."/>
            <person name="Smith H.O."/>
            <person name="Venter J.C."/>
        </authorList>
    </citation>
    <scope>NUCLEOTIDE SEQUENCE [LARGE SCALE GENOMIC DNA]</scope>
    <source>
        <strain>ATCC 51907 / DSM 11121 / KW20 / Rd</strain>
    </source>
</reference>
<protein>
    <recommendedName>
        <fullName>Uncharacterized protein HI_0894</fullName>
    </recommendedName>
</protein>
<proteinExistence type="inferred from homology"/>
<gene>
    <name type="ordered locus">HI_0894</name>
</gene>
<sequence>MKIILVVFVLIFVGVIGFNMIKGVMISRAIAGMPESSSPVTALEVQPREWTPVINTTGLVRPNQGAMLSTQNAGAVSQVLVQNGQNVKKGEVLVELDSSVERANLQAAQAQLSALRQTYQRYVGLLNSNAVSRQEMDNAKAAYDAQVASIESLKAAIERRKIVAPFDGKAGIVKINVGQYVNVGTEIVRVEDTSSMKVDFALSQNDLDKLHIGQRVTATTDARLGETFSARITAIEPAINSSTGLVDVQATFDPEDGHKLLSGMFSRLRIALPTETNQVVVPQVAISYNMYGEIAYLLEPLSEEEKGKMSGNEKLDRLYRAKQITVFTKDRQGVYAQLQGNEVKVGDKIITGGQQGIGNGSLVEWIKKDIVGAIEPAHKTPL</sequence>
<accession>Q57500</accession>
<evidence type="ECO:0000255" key="1"/>
<evidence type="ECO:0000305" key="2"/>
<feature type="chain" id="PRO_0000201893" description="Uncharacterized protein HI_0894">
    <location>
        <begin position="1"/>
        <end position="382"/>
    </location>
</feature>
<feature type="transmembrane region" description="Helical" evidence="1">
    <location>
        <begin position="1"/>
        <end position="21"/>
    </location>
</feature>
<name>Y894_HAEIN</name>
<dbReference type="EMBL" id="L42023">
    <property type="protein sequence ID" value="AAC22554.1"/>
    <property type="molecule type" value="Genomic_DNA"/>
</dbReference>
<dbReference type="RefSeq" id="NP_439055.1">
    <property type="nucleotide sequence ID" value="NC_000907.1"/>
</dbReference>
<dbReference type="SMR" id="Q57500"/>
<dbReference type="STRING" id="71421.HI_0894"/>
<dbReference type="EnsemblBacteria" id="AAC22554">
    <property type="protein sequence ID" value="AAC22554"/>
    <property type="gene ID" value="HI_0894"/>
</dbReference>
<dbReference type="KEGG" id="hin:HI_0894"/>
<dbReference type="PATRIC" id="fig|71421.8.peg.936"/>
<dbReference type="eggNOG" id="COG0845">
    <property type="taxonomic scope" value="Bacteria"/>
</dbReference>
<dbReference type="HOGENOM" id="CLU_018816_1_2_6"/>
<dbReference type="OrthoDB" id="9806939at2"/>
<dbReference type="PhylomeDB" id="Q57500"/>
<dbReference type="BioCyc" id="HINF71421:G1GJ1-934-MONOMER"/>
<dbReference type="Proteomes" id="UP000000579">
    <property type="component" value="Chromosome"/>
</dbReference>
<dbReference type="GO" id="GO:1990281">
    <property type="term" value="C:efflux pump complex"/>
    <property type="evidence" value="ECO:0000318"/>
    <property type="project" value="GO_Central"/>
</dbReference>
<dbReference type="GO" id="GO:0015562">
    <property type="term" value="F:efflux transmembrane transporter activity"/>
    <property type="evidence" value="ECO:0000318"/>
    <property type="project" value="GO_Central"/>
</dbReference>
<dbReference type="FunFam" id="1.10.287.470:FF:000026">
    <property type="entry name" value="Efflux RND transporter periplasmic adaptor subunit"/>
    <property type="match status" value="1"/>
</dbReference>
<dbReference type="FunFam" id="2.40.30.170:FF:000010">
    <property type="entry name" value="Efflux RND transporter periplasmic adaptor subunit"/>
    <property type="match status" value="1"/>
</dbReference>
<dbReference type="Gene3D" id="2.40.30.170">
    <property type="match status" value="1"/>
</dbReference>
<dbReference type="Gene3D" id="2.40.420.20">
    <property type="match status" value="1"/>
</dbReference>
<dbReference type="Gene3D" id="2.40.50.100">
    <property type="match status" value="1"/>
</dbReference>
<dbReference type="Gene3D" id="1.10.287.470">
    <property type="entry name" value="Helix hairpin bin"/>
    <property type="match status" value="1"/>
</dbReference>
<dbReference type="InterPro" id="IPR032317">
    <property type="entry name" value="CusB_D23"/>
</dbReference>
<dbReference type="InterPro" id="IPR006143">
    <property type="entry name" value="RND_pump_MFP"/>
</dbReference>
<dbReference type="NCBIfam" id="TIGR01730">
    <property type="entry name" value="RND_mfp"/>
    <property type="match status" value="1"/>
</dbReference>
<dbReference type="PANTHER" id="PTHR30469:SF11">
    <property type="entry name" value="BLL4320 PROTEIN"/>
    <property type="match status" value="1"/>
</dbReference>
<dbReference type="PANTHER" id="PTHR30469">
    <property type="entry name" value="MULTIDRUG RESISTANCE PROTEIN MDTA"/>
    <property type="match status" value="1"/>
</dbReference>
<dbReference type="Pfam" id="PF16576">
    <property type="entry name" value="HlyD_D23"/>
    <property type="match status" value="1"/>
</dbReference>
<dbReference type="SUPFAM" id="SSF111369">
    <property type="entry name" value="HlyD-like secretion proteins"/>
    <property type="match status" value="1"/>
</dbReference>
<keyword id="KW-0472">Membrane</keyword>
<keyword id="KW-1185">Reference proteome</keyword>
<keyword id="KW-0812">Transmembrane</keyword>
<keyword id="KW-1133">Transmembrane helix</keyword>
<comment type="subcellular location">
    <subcellularLocation>
        <location evidence="2">Membrane</location>
        <topology evidence="2">Single-pass membrane protein</topology>
    </subcellularLocation>
</comment>
<comment type="similarity">
    <text evidence="2">Belongs to the membrane fusion protein (MFP) (TC 8.A.1) family.</text>
</comment>